<gene>
    <name evidence="1" type="primary">rpsR</name>
    <name type="ordered locus">Francci3_4520</name>
</gene>
<reference key="1">
    <citation type="journal article" date="2007" name="Genome Res.">
        <title>Genome characteristics of facultatively symbiotic Frankia sp. strains reflect host range and host plant biogeography.</title>
        <authorList>
            <person name="Normand P."/>
            <person name="Lapierre P."/>
            <person name="Tisa L.S."/>
            <person name="Gogarten J.P."/>
            <person name="Alloisio N."/>
            <person name="Bagnarol E."/>
            <person name="Bassi C.A."/>
            <person name="Berry A.M."/>
            <person name="Bickhart D.M."/>
            <person name="Choisne N."/>
            <person name="Couloux A."/>
            <person name="Cournoyer B."/>
            <person name="Cruveiller S."/>
            <person name="Daubin V."/>
            <person name="Demange N."/>
            <person name="Francino M.P."/>
            <person name="Goltsman E."/>
            <person name="Huang Y."/>
            <person name="Kopp O.R."/>
            <person name="Labarre L."/>
            <person name="Lapidus A."/>
            <person name="Lavire C."/>
            <person name="Marechal J."/>
            <person name="Martinez M."/>
            <person name="Mastronunzio J.E."/>
            <person name="Mullin B.C."/>
            <person name="Niemann J."/>
            <person name="Pujic P."/>
            <person name="Rawnsley T."/>
            <person name="Rouy Z."/>
            <person name="Schenowitz C."/>
            <person name="Sellstedt A."/>
            <person name="Tavares F."/>
            <person name="Tomkins J.P."/>
            <person name="Vallenet D."/>
            <person name="Valverde C."/>
            <person name="Wall L.G."/>
            <person name="Wang Y."/>
            <person name="Medigue C."/>
            <person name="Benson D.R."/>
        </authorList>
    </citation>
    <scope>NUCLEOTIDE SEQUENCE [LARGE SCALE GENOMIC DNA]</scope>
    <source>
        <strain>DSM 45818 / CECT 9043 / HFP020203 / CcI3</strain>
    </source>
</reference>
<evidence type="ECO:0000255" key="1">
    <source>
        <dbReference type="HAMAP-Rule" id="MF_00270"/>
    </source>
</evidence>
<evidence type="ECO:0000305" key="2"/>
<accession>Q2J4C6</accession>
<feature type="chain" id="PRO_1000003499" description="Small ribosomal subunit protein bS18">
    <location>
        <begin position="1"/>
        <end position="78"/>
    </location>
</feature>
<sequence>MAKAAVRKPKKKVCVFCKDKVDYIDFKDTSLLRKYISDRGKIRARRVSGNCSQHQRDVATAVKNSREMALLPYTASAR</sequence>
<comment type="function">
    <text evidence="1">Binds as a heterodimer with protein bS6 to the central domain of the 16S rRNA, where it helps stabilize the platform of the 30S subunit.</text>
</comment>
<comment type="subunit">
    <text evidence="1">Part of the 30S ribosomal subunit. Forms a tight heterodimer with protein bS6.</text>
</comment>
<comment type="similarity">
    <text evidence="1">Belongs to the bacterial ribosomal protein bS18 family.</text>
</comment>
<organism>
    <name type="scientific">Frankia casuarinae (strain DSM 45818 / CECT 9043 / HFP020203 / CcI3)</name>
    <dbReference type="NCBI Taxonomy" id="106370"/>
    <lineage>
        <taxon>Bacteria</taxon>
        <taxon>Bacillati</taxon>
        <taxon>Actinomycetota</taxon>
        <taxon>Actinomycetes</taxon>
        <taxon>Frankiales</taxon>
        <taxon>Frankiaceae</taxon>
        <taxon>Frankia</taxon>
    </lineage>
</organism>
<proteinExistence type="inferred from homology"/>
<protein>
    <recommendedName>
        <fullName evidence="1">Small ribosomal subunit protein bS18</fullName>
    </recommendedName>
    <alternativeName>
        <fullName evidence="2">30S ribosomal protein S18</fullName>
    </alternativeName>
</protein>
<keyword id="KW-1185">Reference proteome</keyword>
<keyword id="KW-0687">Ribonucleoprotein</keyword>
<keyword id="KW-0689">Ribosomal protein</keyword>
<keyword id="KW-0694">RNA-binding</keyword>
<keyword id="KW-0699">rRNA-binding</keyword>
<name>RS18_FRACC</name>
<dbReference type="EMBL" id="CP000249">
    <property type="protein sequence ID" value="ABD13866.1"/>
    <property type="molecule type" value="Genomic_DNA"/>
</dbReference>
<dbReference type="RefSeq" id="WP_011438874.1">
    <property type="nucleotide sequence ID" value="NZ_MSEA01000600.1"/>
</dbReference>
<dbReference type="SMR" id="Q2J4C6"/>
<dbReference type="STRING" id="106370.Francci3_4520"/>
<dbReference type="KEGG" id="fra:Francci3_4520"/>
<dbReference type="eggNOG" id="COG0238">
    <property type="taxonomic scope" value="Bacteria"/>
</dbReference>
<dbReference type="HOGENOM" id="CLU_148710_2_2_11"/>
<dbReference type="OrthoDB" id="9812008at2"/>
<dbReference type="PhylomeDB" id="Q2J4C6"/>
<dbReference type="Proteomes" id="UP000001937">
    <property type="component" value="Chromosome"/>
</dbReference>
<dbReference type="GO" id="GO:0022627">
    <property type="term" value="C:cytosolic small ribosomal subunit"/>
    <property type="evidence" value="ECO:0007669"/>
    <property type="project" value="TreeGrafter"/>
</dbReference>
<dbReference type="GO" id="GO:0070181">
    <property type="term" value="F:small ribosomal subunit rRNA binding"/>
    <property type="evidence" value="ECO:0007669"/>
    <property type="project" value="TreeGrafter"/>
</dbReference>
<dbReference type="GO" id="GO:0003735">
    <property type="term" value="F:structural constituent of ribosome"/>
    <property type="evidence" value="ECO:0007669"/>
    <property type="project" value="InterPro"/>
</dbReference>
<dbReference type="GO" id="GO:0006412">
    <property type="term" value="P:translation"/>
    <property type="evidence" value="ECO:0007669"/>
    <property type="project" value="UniProtKB-UniRule"/>
</dbReference>
<dbReference type="FunFam" id="4.10.640.10:FF:000004">
    <property type="entry name" value="30S ribosomal protein S18"/>
    <property type="match status" value="1"/>
</dbReference>
<dbReference type="Gene3D" id="4.10.640.10">
    <property type="entry name" value="Ribosomal protein S18"/>
    <property type="match status" value="1"/>
</dbReference>
<dbReference type="HAMAP" id="MF_00270">
    <property type="entry name" value="Ribosomal_bS18"/>
    <property type="match status" value="1"/>
</dbReference>
<dbReference type="InterPro" id="IPR001648">
    <property type="entry name" value="Ribosomal_bS18"/>
</dbReference>
<dbReference type="InterPro" id="IPR018275">
    <property type="entry name" value="Ribosomal_bS18_CS"/>
</dbReference>
<dbReference type="InterPro" id="IPR036870">
    <property type="entry name" value="Ribosomal_bS18_sf"/>
</dbReference>
<dbReference type="NCBIfam" id="TIGR00165">
    <property type="entry name" value="S18"/>
    <property type="match status" value="1"/>
</dbReference>
<dbReference type="PANTHER" id="PTHR13479">
    <property type="entry name" value="30S RIBOSOMAL PROTEIN S18"/>
    <property type="match status" value="1"/>
</dbReference>
<dbReference type="PANTHER" id="PTHR13479:SF62">
    <property type="entry name" value="SMALL RIBOSOMAL SUBUNIT PROTEIN BS18A"/>
    <property type="match status" value="1"/>
</dbReference>
<dbReference type="Pfam" id="PF01084">
    <property type="entry name" value="Ribosomal_S18"/>
    <property type="match status" value="1"/>
</dbReference>
<dbReference type="PRINTS" id="PR00974">
    <property type="entry name" value="RIBOSOMALS18"/>
</dbReference>
<dbReference type="SUPFAM" id="SSF46911">
    <property type="entry name" value="Ribosomal protein S18"/>
    <property type="match status" value="1"/>
</dbReference>
<dbReference type="PROSITE" id="PS00057">
    <property type="entry name" value="RIBOSOMAL_S18"/>
    <property type="match status" value="1"/>
</dbReference>